<name>UPP_CAUSK</name>
<keyword id="KW-0021">Allosteric enzyme</keyword>
<keyword id="KW-0328">Glycosyltransferase</keyword>
<keyword id="KW-0342">GTP-binding</keyword>
<keyword id="KW-0460">Magnesium</keyword>
<keyword id="KW-0547">Nucleotide-binding</keyword>
<keyword id="KW-0808">Transferase</keyword>
<gene>
    <name evidence="1" type="primary">upp</name>
    <name type="ordered locus">Caul_3184</name>
</gene>
<protein>
    <recommendedName>
        <fullName evidence="1">Uracil phosphoribosyltransferase</fullName>
        <ecNumber evidence="1">2.4.2.9</ecNumber>
    </recommendedName>
    <alternativeName>
        <fullName evidence="1">UMP pyrophosphorylase</fullName>
    </alternativeName>
    <alternativeName>
        <fullName evidence="1">UPRTase</fullName>
    </alternativeName>
</protein>
<accession>B0T2R0</accession>
<comment type="function">
    <text evidence="1">Catalyzes the conversion of uracil and 5-phospho-alpha-D-ribose 1-diphosphate (PRPP) to UMP and diphosphate.</text>
</comment>
<comment type="catalytic activity">
    <reaction evidence="1">
        <text>UMP + diphosphate = 5-phospho-alpha-D-ribose 1-diphosphate + uracil</text>
        <dbReference type="Rhea" id="RHEA:13017"/>
        <dbReference type="ChEBI" id="CHEBI:17568"/>
        <dbReference type="ChEBI" id="CHEBI:33019"/>
        <dbReference type="ChEBI" id="CHEBI:57865"/>
        <dbReference type="ChEBI" id="CHEBI:58017"/>
        <dbReference type="EC" id="2.4.2.9"/>
    </reaction>
</comment>
<comment type="cofactor">
    <cofactor evidence="1">
        <name>Mg(2+)</name>
        <dbReference type="ChEBI" id="CHEBI:18420"/>
    </cofactor>
    <text evidence="1">Binds 1 Mg(2+) ion per subunit. The magnesium is bound as Mg-PRPP.</text>
</comment>
<comment type="activity regulation">
    <text evidence="1">Allosterically activated by GTP.</text>
</comment>
<comment type="pathway">
    <text evidence="1">Pyrimidine metabolism; UMP biosynthesis via salvage pathway; UMP from uracil: step 1/1.</text>
</comment>
<comment type="similarity">
    <text evidence="1">Belongs to the UPRTase family.</text>
</comment>
<evidence type="ECO:0000255" key="1">
    <source>
        <dbReference type="HAMAP-Rule" id="MF_01218"/>
    </source>
</evidence>
<feature type="chain" id="PRO_1000085623" description="Uracil phosphoribosyltransferase">
    <location>
        <begin position="1"/>
        <end position="209"/>
    </location>
</feature>
<feature type="binding site" evidence="1">
    <location>
        <position position="79"/>
    </location>
    <ligand>
        <name>5-phospho-alpha-D-ribose 1-diphosphate</name>
        <dbReference type="ChEBI" id="CHEBI:58017"/>
    </ligand>
</feature>
<feature type="binding site" evidence="1">
    <location>
        <position position="104"/>
    </location>
    <ligand>
        <name>5-phospho-alpha-D-ribose 1-diphosphate</name>
        <dbReference type="ChEBI" id="CHEBI:58017"/>
    </ligand>
</feature>
<feature type="binding site" evidence="1">
    <location>
        <begin position="131"/>
        <end position="139"/>
    </location>
    <ligand>
        <name>5-phospho-alpha-D-ribose 1-diphosphate</name>
        <dbReference type="ChEBI" id="CHEBI:58017"/>
    </ligand>
</feature>
<feature type="binding site" evidence="1">
    <location>
        <position position="194"/>
    </location>
    <ligand>
        <name>uracil</name>
        <dbReference type="ChEBI" id="CHEBI:17568"/>
    </ligand>
</feature>
<feature type="binding site" evidence="1">
    <location>
        <begin position="199"/>
        <end position="201"/>
    </location>
    <ligand>
        <name>uracil</name>
        <dbReference type="ChEBI" id="CHEBI:17568"/>
    </ligand>
</feature>
<feature type="binding site" evidence="1">
    <location>
        <position position="200"/>
    </location>
    <ligand>
        <name>5-phospho-alpha-D-ribose 1-diphosphate</name>
        <dbReference type="ChEBI" id="CHEBI:58017"/>
    </ligand>
</feature>
<dbReference type="EC" id="2.4.2.9" evidence="1"/>
<dbReference type="EMBL" id="CP000927">
    <property type="protein sequence ID" value="ABZ72311.1"/>
    <property type="molecule type" value="Genomic_DNA"/>
</dbReference>
<dbReference type="SMR" id="B0T2R0"/>
<dbReference type="STRING" id="366602.Caul_3184"/>
<dbReference type="KEGG" id="cak:Caul_3184"/>
<dbReference type="eggNOG" id="COG0035">
    <property type="taxonomic scope" value="Bacteria"/>
</dbReference>
<dbReference type="HOGENOM" id="CLU_067096_2_2_5"/>
<dbReference type="OrthoDB" id="9781675at2"/>
<dbReference type="UniPathway" id="UPA00574">
    <property type="reaction ID" value="UER00636"/>
</dbReference>
<dbReference type="GO" id="GO:0005525">
    <property type="term" value="F:GTP binding"/>
    <property type="evidence" value="ECO:0007669"/>
    <property type="project" value="UniProtKB-KW"/>
</dbReference>
<dbReference type="GO" id="GO:0000287">
    <property type="term" value="F:magnesium ion binding"/>
    <property type="evidence" value="ECO:0007669"/>
    <property type="project" value="UniProtKB-UniRule"/>
</dbReference>
<dbReference type="GO" id="GO:0004845">
    <property type="term" value="F:uracil phosphoribosyltransferase activity"/>
    <property type="evidence" value="ECO:0007669"/>
    <property type="project" value="UniProtKB-UniRule"/>
</dbReference>
<dbReference type="GO" id="GO:0044206">
    <property type="term" value="P:UMP salvage"/>
    <property type="evidence" value="ECO:0007669"/>
    <property type="project" value="UniProtKB-UniRule"/>
</dbReference>
<dbReference type="GO" id="GO:0006223">
    <property type="term" value="P:uracil salvage"/>
    <property type="evidence" value="ECO:0007669"/>
    <property type="project" value="InterPro"/>
</dbReference>
<dbReference type="CDD" id="cd06223">
    <property type="entry name" value="PRTases_typeI"/>
    <property type="match status" value="1"/>
</dbReference>
<dbReference type="FunFam" id="3.40.50.2020:FF:000003">
    <property type="entry name" value="Uracil phosphoribosyltransferase"/>
    <property type="match status" value="1"/>
</dbReference>
<dbReference type="Gene3D" id="3.40.50.2020">
    <property type="match status" value="1"/>
</dbReference>
<dbReference type="HAMAP" id="MF_01218_B">
    <property type="entry name" value="Upp_B"/>
    <property type="match status" value="1"/>
</dbReference>
<dbReference type="InterPro" id="IPR000836">
    <property type="entry name" value="PRibTrfase_dom"/>
</dbReference>
<dbReference type="InterPro" id="IPR029057">
    <property type="entry name" value="PRTase-like"/>
</dbReference>
<dbReference type="InterPro" id="IPR034332">
    <property type="entry name" value="Upp_B"/>
</dbReference>
<dbReference type="InterPro" id="IPR050054">
    <property type="entry name" value="UPRTase/APRTase"/>
</dbReference>
<dbReference type="InterPro" id="IPR005765">
    <property type="entry name" value="Ura_phspho_trans"/>
</dbReference>
<dbReference type="NCBIfam" id="NF001097">
    <property type="entry name" value="PRK00129.1"/>
    <property type="match status" value="1"/>
</dbReference>
<dbReference type="NCBIfam" id="TIGR01091">
    <property type="entry name" value="upp"/>
    <property type="match status" value="1"/>
</dbReference>
<dbReference type="PANTHER" id="PTHR32315">
    <property type="entry name" value="ADENINE PHOSPHORIBOSYLTRANSFERASE"/>
    <property type="match status" value="1"/>
</dbReference>
<dbReference type="PANTHER" id="PTHR32315:SF4">
    <property type="entry name" value="URACIL PHOSPHORIBOSYLTRANSFERASE, CHLOROPLASTIC"/>
    <property type="match status" value="1"/>
</dbReference>
<dbReference type="Pfam" id="PF14681">
    <property type="entry name" value="UPRTase"/>
    <property type="match status" value="1"/>
</dbReference>
<dbReference type="SUPFAM" id="SSF53271">
    <property type="entry name" value="PRTase-like"/>
    <property type="match status" value="1"/>
</dbReference>
<organism>
    <name type="scientific">Caulobacter sp. (strain K31)</name>
    <dbReference type="NCBI Taxonomy" id="366602"/>
    <lineage>
        <taxon>Bacteria</taxon>
        <taxon>Pseudomonadati</taxon>
        <taxon>Pseudomonadota</taxon>
        <taxon>Alphaproteobacteria</taxon>
        <taxon>Caulobacterales</taxon>
        <taxon>Caulobacteraceae</taxon>
        <taxon>Caulobacter</taxon>
    </lineage>
</organism>
<sequence length="209" mass="22770">MQGVTIVDHPLVRHKLTRMRDKQTSTKTFRALMRETATLLCYEVTRALPTHTVEIETPVGPTKAEEISGKKMVFAPILRAGLGMAEGMLDLVPSARVAHIGLFRDPVSLEAVEYYYKTPDDIADRLVIVVDPMLATGHTAVAAIARLKRSGVTDLRFVCLVASVQGVETLRAAHPDVPIWTAAVDAELNDHGYIVPGLGDAGDRTFGTR</sequence>
<reference key="1">
    <citation type="submission" date="2008-01" db="EMBL/GenBank/DDBJ databases">
        <title>Complete sequence of chromosome of Caulobacter sp. K31.</title>
        <authorList>
            <consortium name="US DOE Joint Genome Institute"/>
            <person name="Copeland A."/>
            <person name="Lucas S."/>
            <person name="Lapidus A."/>
            <person name="Barry K."/>
            <person name="Glavina del Rio T."/>
            <person name="Dalin E."/>
            <person name="Tice H."/>
            <person name="Pitluck S."/>
            <person name="Bruce D."/>
            <person name="Goodwin L."/>
            <person name="Thompson L.S."/>
            <person name="Brettin T."/>
            <person name="Detter J.C."/>
            <person name="Han C."/>
            <person name="Schmutz J."/>
            <person name="Larimer F."/>
            <person name="Land M."/>
            <person name="Hauser L."/>
            <person name="Kyrpides N."/>
            <person name="Kim E."/>
            <person name="Stephens C."/>
            <person name="Richardson P."/>
        </authorList>
    </citation>
    <scope>NUCLEOTIDE SEQUENCE [LARGE SCALE GENOMIC DNA]</scope>
    <source>
        <strain>K31</strain>
    </source>
</reference>
<proteinExistence type="inferred from homology"/>